<reference key="1">
    <citation type="journal article" date="2004" name="Nature">
        <title>Genome evolution in yeasts.</title>
        <authorList>
            <person name="Dujon B."/>
            <person name="Sherman D."/>
            <person name="Fischer G."/>
            <person name="Durrens P."/>
            <person name="Casaregola S."/>
            <person name="Lafontaine I."/>
            <person name="de Montigny J."/>
            <person name="Marck C."/>
            <person name="Neuveglise C."/>
            <person name="Talla E."/>
            <person name="Goffard N."/>
            <person name="Frangeul L."/>
            <person name="Aigle M."/>
            <person name="Anthouard V."/>
            <person name="Babour A."/>
            <person name="Barbe V."/>
            <person name="Barnay S."/>
            <person name="Blanchin S."/>
            <person name="Beckerich J.-M."/>
            <person name="Beyne E."/>
            <person name="Bleykasten C."/>
            <person name="Boisrame A."/>
            <person name="Boyer J."/>
            <person name="Cattolico L."/>
            <person name="Confanioleri F."/>
            <person name="de Daruvar A."/>
            <person name="Despons L."/>
            <person name="Fabre E."/>
            <person name="Fairhead C."/>
            <person name="Ferry-Dumazet H."/>
            <person name="Groppi A."/>
            <person name="Hantraye F."/>
            <person name="Hennequin C."/>
            <person name="Jauniaux N."/>
            <person name="Joyet P."/>
            <person name="Kachouri R."/>
            <person name="Kerrest A."/>
            <person name="Koszul R."/>
            <person name="Lemaire M."/>
            <person name="Lesur I."/>
            <person name="Ma L."/>
            <person name="Muller H."/>
            <person name="Nicaud J.-M."/>
            <person name="Nikolski M."/>
            <person name="Oztas S."/>
            <person name="Ozier-Kalogeropoulos O."/>
            <person name="Pellenz S."/>
            <person name="Potier S."/>
            <person name="Richard G.-F."/>
            <person name="Straub M.-L."/>
            <person name="Suleau A."/>
            <person name="Swennen D."/>
            <person name="Tekaia F."/>
            <person name="Wesolowski-Louvel M."/>
            <person name="Westhof E."/>
            <person name="Wirth B."/>
            <person name="Zeniou-Meyer M."/>
            <person name="Zivanovic Y."/>
            <person name="Bolotin-Fukuhara M."/>
            <person name="Thierry A."/>
            <person name="Bouchier C."/>
            <person name="Caudron B."/>
            <person name="Scarpelli C."/>
            <person name="Gaillardin C."/>
            <person name="Weissenbach J."/>
            <person name="Wincker P."/>
            <person name="Souciet J.-L."/>
        </authorList>
    </citation>
    <scope>NUCLEOTIDE SEQUENCE [LARGE SCALE GENOMIC DNA]</scope>
    <source>
        <strain>ATCC 8585 / CBS 2359 / DSM 70799 / NBRC 1267 / NRRL Y-1140 / WM37</strain>
    </source>
</reference>
<feature type="chain" id="PRO_0000320418" description="Ribosome biogenesis protein NSA2">
    <location>
        <begin position="1"/>
        <end position="261"/>
    </location>
</feature>
<feature type="region of interest" description="Disordered" evidence="4">
    <location>
        <begin position="1"/>
        <end position="39"/>
    </location>
</feature>
<feature type="region of interest" description="Disordered" evidence="4">
    <location>
        <begin position="62"/>
        <end position="82"/>
    </location>
</feature>
<feature type="short sequence motif" description="Nuclear localization signal 1" evidence="3">
    <location>
        <begin position="15"/>
        <end position="22"/>
    </location>
</feature>
<feature type="short sequence motif" description="Nuclear localization signal 2" evidence="3">
    <location>
        <begin position="51"/>
        <end position="58"/>
    </location>
</feature>
<feature type="compositionally biased region" description="Basic and acidic residues" evidence="4">
    <location>
        <begin position="7"/>
        <end position="39"/>
    </location>
</feature>
<protein>
    <recommendedName>
        <fullName>Ribosome biogenesis protein NSA2</fullName>
    </recommendedName>
</protein>
<keyword id="KW-0539">Nucleus</keyword>
<keyword id="KW-1185">Reference proteome</keyword>
<keyword id="KW-0687">Ribonucleoprotein</keyword>
<keyword id="KW-0690">Ribosome biogenesis</keyword>
<keyword id="KW-0698">rRNA processing</keyword>
<proteinExistence type="inferred from homology"/>
<organism>
    <name type="scientific">Kluyveromyces lactis (strain ATCC 8585 / CBS 2359 / DSM 70799 / NBRC 1267 / NRRL Y-1140 / WM37)</name>
    <name type="common">Yeast</name>
    <name type="synonym">Candida sphaerica</name>
    <dbReference type="NCBI Taxonomy" id="284590"/>
    <lineage>
        <taxon>Eukaryota</taxon>
        <taxon>Fungi</taxon>
        <taxon>Dikarya</taxon>
        <taxon>Ascomycota</taxon>
        <taxon>Saccharomycotina</taxon>
        <taxon>Saccharomycetes</taxon>
        <taxon>Saccharomycetales</taxon>
        <taxon>Saccharomycetaceae</taxon>
        <taxon>Kluyveromyces</taxon>
    </lineage>
</organism>
<comment type="function">
    <text evidence="1">Involved in the biogenesis of the 60S ribosomal subunit. May play a part in the quality control of pre-60S particles (By similarity).</text>
</comment>
<comment type="subunit">
    <text evidence="2">Component of the pre-66S ribosomal particle. Interacts with NOP7 and RRP1. Interacts with RSA4 (via WD repeats).</text>
</comment>
<comment type="subcellular location">
    <subcellularLocation>
        <location evidence="1">Nucleus</location>
        <location evidence="1">Nucleolus</location>
    </subcellularLocation>
</comment>
<comment type="similarity">
    <text evidence="5">Belongs to the eukaryotic ribosomal protein eS8 family. Ribosome biogenesis protein NSA2 subfamily.</text>
</comment>
<accession>Q6CNC5</accession>
<gene>
    <name type="primary">NSA2</name>
    <name type="ordered locus">KLLA0E13651g</name>
</gene>
<name>NSA2_KLULA</name>
<evidence type="ECO:0000250" key="1"/>
<evidence type="ECO:0000250" key="2">
    <source>
        <dbReference type="UniProtKB" id="P40078"/>
    </source>
</evidence>
<evidence type="ECO:0000255" key="3">
    <source>
        <dbReference type="PROSITE-ProRule" id="PRU00768"/>
    </source>
</evidence>
<evidence type="ECO:0000256" key="4">
    <source>
        <dbReference type="SAM" id="MobiDB-lite"/>
    </source>
</evidence>
<evidence type="ECO:0000305" key="5"/>
<sequence length="261" mass="29646">MPQNEYIEQHIKQHGRRLDHDERKRKREAREAHKISEKAQKLTGWKGKQFAKKRYAEKVAMKKKIRAHEQSKVKGGSKPLDENGEALPTYLLDREQNNTAKAISSSIKQKRLEKADKFSVPLPKVRGISEEEMFKVVKTGKSKSKAWKRMITKHTFVGEGFTRRPVKMERIIRPSALRQKKANVTHPELGVTVFLPILAVKKNPQSPMYTQLGVLTKGTIIEVNVSELGMVTSGGKVVWGKYAQITNEPDRDGCVNAVLLV</sequence>
<dbReference type="EMBL" id="CR382125">
    <property type="protein sequence ID" value="CAG99651.1"/>
    <property type="molecule type" value="Genomic_DNA"/>
</dbReference>
<dbReference type="RefSeq" id="XP_454564.1">
    <property type="nucleotide sequence ID" value="XM_454564.1"/>
</dbReference>
<dbReference type="SMR" id="Q6CNC5"/>
<dbReference type="FunCoup" id="Q6CNC5">
    <property type="interactions" value="1290"/>
</dbReference>
<dbReference type="STRING" id="284590.Q6CNC5"/>
<dbReference type="PaxDb" id="284590-Q6CNC5"/>
<dbReference type="KEGG" id="kla:KLLA0_E13619g"/>
<dbReference type="eggNOG" id="KOG3163">
    <property type="taxonomic scope" value="Eukaryota"/>
</dbReference>
<dbReference type="HOGENOM" id="CLU_1070048_0_0_1"/>
<dbReference type="InParanoid" id="Q6CNC5"/>
<dbReference type="OMA" id="TNTPEND"/>
<dbReference type="Proteomes" id="UP000000598">
    <property type="component" value="Chromosome E"/>
</dbReference>
<dbReference type="GO" id="GO:0005730">
    <property type="term" value="C:nucleolus"/>
    <property type="evidence" value="ECO:0007669"/>
    <property type="project" value="UniProtKB-SubCell"/>
</dbReference>
<dbReference type="GO" id="GO:1990904">
    <property type="term" value="C:ribonucleoprotein complex"/>
    <property type="evidence" value="ECO:0007669"/>
    <property type="project" value="UniProtKB-KW"/>
</dbReference>
<dbReference type="GO" id="GO:0006364">
    <property type="term" value="P:rRNA processing"/>
    <property type="evidence" value="ECO:0007669"/>
    <property type="project" value="UniProtKB-KW"/>
</dbReference>
<dbReference type="CDD" id="cd11381">
    <property type="entry name" value="NSA2"/>
    <property type="match status" value="1"/>
</dbReference>
<dbReference type="FunFam" id="2.40.10.310:FF:000001">
    <property type="entry name" value="NSA2, ribosome biogenesis homolog"/>
    <property type="match status" value="1"/>
</dbReference>
<dbReference type="Gene3D" id="2.40.10.310">
    <property type="match status" value="1"/>
</dbReference>
<dbReference type="InterPro" id="IPR039411">
    <property type="entry name" value="NSA2_fam"/>
</dbReference>
<dbReference type="InterPro" id="IPR022309">
    <property type="entry name" value="Ribosomal_Se8/biogenesis_NSA2"/>
</dbReference>
<dbReference type="PANTHER" id="PTHR12642">
    <property type="entry name" value="RIBOSOME BIOGENESIS PROTEIN NSA2 HOMOLOG"/>
    <property type="match status" value="1"/>
</dbReference>
<dbReference type="Pfam" id="PF01201">
    <property type="entry name" value="Ribosomal_S8e"/>
    <property type="match status" value="1"/>
</dbReference>